<evidence type="ECO:0000255" key="1">
    <source>
        <dbReference type="HAMAP-Rule" id="MF_00375"/>
    </source>
</evidence>
<name>GSA_ALKMQ</name>
<gene>
    <name evidence="1" type="primary">hemL</name>
    <name type="ordered locus">Amet_0063</name>
</gene>
<sequence>MDKRSIMKYERSQKLFEASQEVIPGGVNSPVRAFSSVGMNPPFIKRGKGAYIYDEDGNKYIDYVGSWGPLILGHCHPEVVENLKAVLETGTSFGAPTEIELKIAELITGAIPSVEMIRMVNSGTEATMTALRLARGYTGRNKIVKFNGNYHGHSDGLLIKAGSGALTHGVPNSPGVTPDVAKNTITAKYNDIEGIMEIFKQQGEEIAAVIIEPIAGNMGVVPMTNKFAHALRKITEDYGALLIFDEVMTGFRVSFGGAQSLYQIKPDLTCFGKIIGGGLPVGAFGGKREIMEHLSPVGPVYQAGTLSGNPLAMTAGYTTLSILHNNSGIYEELEKKAQKLEKGFKKIVKELQIDASFNRVGSMLCMFFTKEKVSDLETASTSNTEIYSQYFRAMLSRGVYLAPTQFETMFISDAHGDVEINRTIEAAYEGLKEIRNNPSI</sequence>
<proteinExistence type="inferred from homology"/>
<organism>
    <name type="scientific">Alkaliphilus metalliredigens (strain QYMF)</name>
    <dbReference type="NCBI Taxonomy" id="293826"/>
    <lineage>
        <taxon>Bacteria</taxon>
        <taxon>Bacillati</taxon>
        <taxon>Bacillota</taxon>
        <taxon>Clostridia</taxon>
        <taxon>Peptostreptococcales</taxon>
        <taxon>Natronincolaceae</taxon>
        <taxon>Alkaliphilus</taxon>
    </lineage>
</organism>
<dbReference type="EC" id="5.4.3.8" evidence="1"/>
<dbReference type="EMBL" id="CP000724">
    <property type="protein sequence ID" value="ABR46306.1"/>
    <property type="molecule type" value="Genomic_DNA"/>
</dbReference>
<dbReference type="RefSeq" id="WP_011971215.1">
    <property type="nucleotide sequence ID" value="NC_009633.1"/>
</dbReference>
<dbReference type="SMR" id="A6TJD8"/>
<dbReference type="STRING" id="293826.Amet_0063"/>
<dbReference type="KEGG" id="amt:Amet_0063"/>
<dbReference type="eggNOG" id="COG0001">
    <property type="taxonomic scope" value="Bacteria"/>
</dbReference>
<dbReference type="HOGENOM" id="CLU_016922_1_5_9"/>
<dbReference type="UniPathway" id="UPA00251">
    <property type="reaction ID" value="UER00317"/>
</dbReference>
<dbReference type="Proteomes" id="UP000001572">
    <property type="component" value="Chromosome"/>
</dbReference>
<dbReference type="GO" id="GO:0005737">
    <property type="term" value="C:cytoplasm"/>
    <property type="evidence" value="ECO:0007669"/>
    <property type="project" value="UniProtKB-SubCell"/>
</dbReference>
<dbReference type="GO" id="GO:0042286">
    <property type="term" value="F:glutamate-1-semialdehyde 2,1-aminomutase activity"/>
    <property type="evidence" value="ECO:0007669"/>
    <property type="project" value="UniProtKB-UniRule"/>
</dbReference>
<dbReference type="GO" id="GO:0030170">
    <property type="term" value="F:pyridoxal phosphate binding"/>
    <property type="evidence" value="ECO:0007669"/>
    <property type="project" value="InterPro"/>
</dbReference>
<dbReference type="GO" id="GO:0008483">
    <property type="term" value="F:transaminase activity"/>
    <property type="evidence" value="ECO:0007669"/>
    <property type="project" value="InterPro"/>
</dbReference>
<dbReference type="GO" id="GO:0006782">
    <property type="term" value="P:protoporphyrinogen IX biosynthetic process"/>
    <property type="evidence" value="ECO:0007669"/>
    <property type="project" value="UniProtKB-UniRule"/>
</dbReference>
<dbReference type="CDD" id="cd00610">
    <property type="entry name" value="OAT_like"/>
    <property type="match status" value="1"/>
</dbReference>
<dbReference type="FunFam" id="3.40.640.10:FF:000021">
    <property type="entry name" value="Glutamate-1-semialdehyde 2,1-aminomutase"/>
    <property type="match status" value="1"/>
</dbReference>
<dbReference type="Gene3D" id="3.90.1150.10">
    <property type="entry name" value="Aspartate Aminotransferase, domain 1"/>
    <property type="match status" value="1"/>
</dbReference>
<dbReference type="Gene3D" id="3.40.640.10">
    <property type="entry name" value="Type I PLP-dependent aspartate aminotransferase-like (Major domain)"/>
    <property type="match status" value="1"/>
</dbReference>
<dbReference type="HAMAP" id="MF_00375">
    <property type="entry name" value="HemL_aminotrans_3"/>
    <property type="match status" value="1"/>
</dbReference>
<dbReference type="InterPro" id="IPR004639">
    <property type="entry name" value="4pyrrol_synth_GluAld_NH2Trfase"/>
</dbReference>
<dbReference type="InterPro" id="IPR005814">
    <property type="entry name" value="Aminotrans_3"/>
</dbReference>
<dbReference type="InterPro" id="IPR049704">
    <property type="entry name" value="Aminotrans_3_PPA_site"/>
</dbReference>
<dbReference type="InterPro" id="IPR015424">
    <property type="entry name" value="PyrdxlP-dep_Trfase"/>
</dbReference>
<dbReference type="InterPro" id="IPR015421">
    <property type="entry name" value="PyrdxlP-dep_Trfase_major"/>
</dbReference>
<dbReference type="InterPro" id="IPR015422">
    <property type="entry name" value="PyrdxlP-dep_Trfase_small"/>
</dbReference>
<dbReference type="NCBIfam" id="TIGR00713">
    <property type="entry name" value="hemL"/>
    <property type="match status" value="1"/>
</dbReference>
<dbReference type="NCBIfam" id="NF000818">
    <property type="entry name" value="PRK00062.1"/>
    <property type="match status" value="1"/>
</dbReference>
<dbReference type="PANTHER" id="PTHR43713">
    <property type="entry name" value="GLUTAMATE-1-SEMIALDEHYDE 2,1-AMINOMUTASE"/>
    <property type="match status" value="1"/>
</dbReference>
<dbReference type="PANTHER" id="PTHR43713:SF3">
    <property type="entry name" value="GLUTAMATE-1-SEMIALDEHYDE 2,1-AMINOMUTASE 1, CHLOROPLASTIC-RELATED"/>
    <property type="match status" value="1"/>
</dbReference>
<dbReference type="Pfam" id="PF00202">
    <property type="entry name" value="Aminotran_3"/>
    <property type="match status" value="1"/>
</dbReference>
<dbReference type="SUPFAM" id="SSF53383">
    <property type="entry name" value="PLP-dependent transferases"/>
    <property type="match status" value="1"/>
</dbReference>
<dbReference type="PROSITE" id="PS00600">
    <property type="entry name" value="AA_TRANSFER_CLASS_3"/>
    <property type="match status" value="1"/>
</dbReference>
<protein>
    <recommendedName>
        <fullName evidence="1">Glutamate-1-semialdehyde 2,1-aminomutase</fullName>
        <shortName evidence="1">GSA</shortName>
        <ecNumber evidence="1">5.4.3.8</ecNumber>
    </recommendedName>
    <alternativeName>
        <fullName evidence="1">Glutamate-1-semialdehyde aminotransferase</fullName>
        <shortName evidence="1">GSA-AT</shortName>
    </alternativeName>
</protein>
<feature type="chain" id="PRO_0000382247" description="Glutamate-1-semialdehyde 2,1-aminomutase">
    <location>
        <begin position="1"/>
        <end position="440"/>
    </location>
</feature>
<feature type="modified residue" description="N6-(pyridoxal phosphate)lysine" evidence="1">
    <location>
        <position position="273"/>
    </location>
</feature>
<comment type="catalytic activity">
    <reaction evidence="1">
        <text>(S)-4-amino-5-oxopentanoate = 5-aminolevulinate</text>
        <dbReference type="Rhea" id="RHEA:14265"/>
        <dbReference type="ChEBI" id="CHEBI:57501"/>
        <dbReference type="ChEBI" id="CHEBI:356416"/>
        <dbReference type="EC" id="5.4.3.8"/>
    </reaction>
</comment>
<comment type="cofactor">
    <cofactor evidence="1">
        <name>pyridoxal 5'-phosphate</name>
        <dbReference type="ChEBI" id="CHEBI:597326"/>
    </cofactor>
</comment>
<comment type="pathway">
    <text evidence="1">Porphyrin-containing compound metabolism; protoporphyrin-IX biosynthesis; 5-aminolevulinate from L-glutamyl-tRNA(Glu): step 2/2.</text>
</comment>
<comment type="subunit">
    <text evidence="1">Homodimer.</text>
</comment>
<comment type="subcellular location">
    <subcellularLocation>
        <location evidence="1">Cytoplasm</location>
    </subcellularLocation>
</comment>
<comment type="similarity">
    <text evidence="1">Belongs to the class-III pyridoxal-phosphate-dependent aminotransferase family. HemL subfamily.</text>
</comment>
<reference key="1">
    <citation type="journal article" date="2016" name="Genome Announc.">
        <title>Complete genome sequence of Alkaliphilus metalliredigens strain QYMF, an alkaliphilic and metal-reducing bacterium isolated from borax-contaminated leachate ponds.</title>
        <authorList>
            <person name="Hwang C."/>
            <person name="Copeland A."/>
            <person name="Lucas S."/>
            <person name="Lapidus A."/>
            <person name="Barry K."/>
            <person name="Detter J.C."/>
            <person name="Glavina Del Rio T."/>
            <person name="Hammon N."/>
            <person name="Israni S."/>
            <person name="Dalin E."/>
            <person name="Tice H."/>
            <person name="Pitluck S."/>
            <person name="Chertkov O."/>
            <person name="Brettin T."/>
            <person name="Bruce D."/>
            <person name="Han C."/>
            <person name="Schmutz J."/>
            <person name="Larimer F."/>
            <person name="Land M.L."/>
            <person name="Hauser L."/>
            <person name="Kyrpides N."/>
            <person name="Mikhailova N."/>
            <person name="Ye Q."/>
            <person name="Zhou J."/>
            <person name="Richardson P."/>
            <person name="Fields M.W."/>
        </authorList>
    </citation>
    <scope>NUCLEOTIDE SEQUENCE [LARGE SCALE GENOMIC DNA]</scope>
    <source>
        <strain>QYMF</strain>
    </source>
</reference>
<accession>A6TJD8</accession>
<keyword id="KW-0963">Cytoplasm</keyword>
<keyword id="KW-0413">Isomerase</keyword>
<keyword id="KW-0627">Porphyrin biosynthesis</keyword>
<keyword id="KW-0663">Pyridoxal phosphate</keyword>
<keyword id="KW-1185">Reference proteome</keyword>